<protein>
    <recommendedName>
        <fullName>Lycopene beta cyclase, chloroplastic</fullName>
        <ecNumber>5.5.1.19</ecNumber>
    </recommendedName>
</protein>
<name>LCYB_TOBAC</name>
<organism>
    <name type="scientific">Nicotiana tabacum</name>
    <name type="common">Common tobacco</name>
    <dbReference type="NCBI Taxonomy" id="4097"/>
    <lineage>
        <taxon>Eukaryota</taxon>
        <taxon>Viridiplantae</taxon>
        <taxon>Streptophyta</taxon>
        <taxon>Embryophyta</taxon>
        <taxon>Tracheophyta</taxon>
        <taxon>Spermatophyta</taxon>
        <taxon>Magnoliopsida</taxon>
        <taxon>eudicotyledons</taxon>
        <taxon>Gunneridae</taxon>
        <taxon>Pentapetalae</taxon>
        <taxon>asterids</taxon>
        <taxon>lamiids</taxon>
        <taxon>Solanales</taxon>
        <taxon>Solanaceae</taxon>
        <taxon>Nicotianoideae</taxon>
        <taxon>Nicotianeae</taxon>
        <taxon>Nicotiana</taxon>
    </lineage>
</organism>
<reference key="1">
    <citation type="journal article" date="1996" name="Plant Mol. Biol.">
        <title>Cloning and characterization of the cDNA for lycopene beta-cyclase from tomato reveals decrease in its expression during fruit ripening.</title>
        <authorList>
            <person name="Pecker I."/>
            <person name="Gabbay R."/>
            <person name="Cunningham F.X. Jr."/>
            <person name="Hirschberg J."/>
        </authorList>
    </citation>
    <scope>NUCLEOTIDE SEQUENCE [MRNA]</scope>
    <scope>CATALYTIC ACTIVITY</scope>
    <source>
        <strain>cv. Samsun NN</strain>
        <tissue>Leaf</tissue>
    </source>
</reference>
<gene>
    <name type="primary">LCY1</name>
    <name type="synonym">CRTL-1</name>
</gene>
<accession>Q43578</accession>
<comment type="function">
    <text>Catalyzes the double cyclization reaction which converts lycopene to beta-carotene and neurosporene to beta-zeacarotene.</text>
</comment>
<comment type="catalytic activity">
    <reaction evidence="2">
        <text>a carotenoid psi-end group = a carotenoid beta-end derivative</text>
        <dbReference type="Rhea" id="RHEA:55620"/>
        <dbReference type="ChEBI" id="CHEBI:139114"/>
        <dbReference type="ChEBI" id="CHEBI:139120"/>
        <dbReference type="EC" id="5.5.1.19"/>
    </reaction>
</comment>
<comment type="pathway">
    <text>Carotenoid biosynthesis; beta-carotene biosynthesis.</text>
</comment>
<comment type="pathway">
    <text>Carotenoid biosynthesis; beta-zeacarotene biosynthesis.</text>
</comment>
<comment type="subcellular location">
    <subcellularLocation>
        <location>Plastid</location>
        <location>Chloroplast</location>
    </subcellularLocation>
</comment>
<comment type="similarity">
    <text evidence="3">Belongs to the lycopene cyclase family.</text>
</comment>
<evidence type="ECO:0000255" key="1"/>
<evidence type="ECO:0000269" key="2">
    <source>
    </source>
</evidence>
<evidence type="ECO:0000305" key="3"/>
<proteinExistence type="evidence at protein level"/>
<keyword id="KW-0125">Carotenoid biosynthesis</keyword>
<keyword id="KW-0150">Chloroplast</keyword>
<keyword id="KW-0413">Isomerase</keyword>
<keyword id="KW-0520">NAD</keyword>
<keyword id="KW-0934">Plastid</keyword>
<keyword id="KW-1185">Reference proteome</keyword>
<keyword id="KW-0809">Transit peptide</keyword>
<sequence>MDTLLKTPNKLEFLHPVHGFSVKASSFNSVKPHKFGSRKICENWGKGVCVKAKSSALLELVPETKKENLDFELPMYDPSKGLVVDLAVVGGGPAGLAVAQQVSEAGLSVVSIDPSPKLIWPNNYGVWVDEFEAMDLLDCLDATWSGTVVYIDDNTTKDLDRPYGRVNRKQLKSKMMQKCILNGVKFHHAKVIKVIHEEAKSMLICNDGVTIQATVVLDATGFSRCLVQYDKPYKPGYQVAYGILAEVEEHPFDTSKMVLMDWRDSHLGNNMELKERNRKVPTFLYAMPFSSNKIFLEETSLVARPGLRMDDIQERMVARLNHLGIKVKSIEEDEHCVIPMGGSLPVIPQRVVGTGGTAGLVHPSTGYMVARTLAAAPVVANAIIHYLGSEKDLLGNELSAAVWKDLWPIERRRQREFFCFGMDILLKLDLPATRRFFDAFFDLEPRYWHGFLSSRLYLPELIFFGLSLFSRASNTSRIEIMTKGTLPLVNMINNLLQDTE</sequence>
<feature type="transit peptide" description="Chloroplast" evidence="1">
    <location>
        <begin position="1"/>
        <end position="81"/>
    </location>
</feature>
<feature type="chain" id="PRO_0000018433" description="Lycopene beta cyclase, chloroplastic">
    <location>
        <begin position="82"/>
        <end position="500"/>
    </location>
</feature>
<feature type="binding site" evidence="1">
    <location>
        <begin position="86"/>
        <end position="114"/>
    </location>
    <ligand>
        <name>NAD(+)</name>
        <dbReference type="ChEBI" id="CHEBI:57540"/>
    </ligand>
</feature>
<dbReference type="EC" id="5.5.1.19"/>
<dbReference type="EMBL" id="X81787">
    <property type="protein sequence ID" value="CAA57386.1"/>
    <property type="molecule type" value="mRNA"/>
</dbReference>
<dbReference type="PIR" id="S66349">
    <property type="entry name" value="S66349"/>
</dbReference>
<dbReference type="PIR" id="S72506">
    <property type="entry name" value="S72506"/>
</dbReference>
<dbReference type="RefSeq" id="NP_001311716.1">
    <property type="nucleotide sequence ID" value="NM_001324787.1"/>
</dbReference>
<dbReference type="SMR" id="Q43578"/>
<dbReference type="STRING" id="4097.Q43578"/>
<dbReference type="PaxDb" id="4097-Q43578"/>
<dbReference type="GeneID" id="107763207"/>
<dbReference type="KEGG" id="ag:CAA57386"/>
<dbReference type="KEGG" id="nta:107763207"/>
<dbReference type="OrthoDB" id="1716816at2759"/>
<dbReference type="UniPathway" id="UPA00802"/>
<dbReference type="UniPathway" id="UPA00805"/>
<dbReference type="Proteomes" id="UP000084051">
    <property type="component" value="Unplaced"/>
</dbReference>
<dbReference type="GO" id="GO:0009507">
    <property type="term" value="C:chloroplast"/>
    <property type="evidence" value="ECO:0007669"/>
    <property type="project" value="UniProtKB-SubCell"/>
</dbReference>
<dbReference type="GO" id="GO:0005739">
    <property type="term" value="C:mitochondrion"/>
    <property type="evidence" value="ECO:0000318"/>
    <property type="project" value="GO_Central"/>
</dbReference>
<dbReference type="GO" id="GO:0045436">
    <property type="term" value="F:lycopene beta cyclase activity"/>
    <property type="evidence" value="ECO:0000318"/>
    <property type="project" value="GO_Central"/>
</dbReference>
<dbReference type="GO" id="GO:0016491">
    <property type="term" value="F:oxidoreductase activity"/>
    <property type="evidence" value="ECO:0000318"/>
    <property type="project" value="GO_Central"/>
</dbReference>
<dbReference type="GO" id="GO:0016705">
    <property type="term" value="F:oxidoreductase activity, acting on paired donors, with incorporation or reduction of molecular oxygen"/>
    <property type="evidence" value="ECO:0007669"/>
    <property type="project" value="InterPro"/>
</dbReference>
<dbReference type="GO" id="GO:0016120">
    <property type="term" value="P:carotene biosynthetic process"/>
    <property type="evidence" value="ECO:0000318"/>
    <property type="project" value="GO_Central"/>
</dbReference>
<dbReference type="GO" id="GO:0006744">
    <property type="term" value="P:ubiquinone biosynthetic process"/>
    <property type="evidence" value="ECO:0000318"/>
    <property type="project" value="GO_Central"/>
</dbReference>
<dbReference type="GO" id="GO:0016123">
    <property type="term" value="P:xanthophyll biosynthetic process"/>
    <property type="evidence" value="ECO:0000318"/>
    <property type="project" value="GO_Central"/>
</dbReference>
<dbReference type="FunFam" id="3.50.50.60:FF:000101">
    <property type="entry name" value="lycopene epsilon cyclase, chloroplastic"/>
    <property type="match status" value="1"/>
</dbReference>
<dbReference type="Gene3D" id="3.50.50.60">
    <property type="entry name" value="FAD/NAD(P)-binding domain"/>
    <property type="match status" value="1"/>
</dbReference>
<dbReference type="InterPro" id="IPR036188">
    <property type="entry name" value="FAD/NAD-bd_sf"/>
</dbReference>
<dbReference type="InterPro" id="IPR010108">
    <property type="entry name" value="Lycopene_cyclase_b/e"/>
</dbReference>
<dbReference type="NCBIfam" id="TIGR01790">
    <property type="entry name" value="carotene-cycl"/>
    <property type="match status" value="1"/>
</dbReference>
<dbReference type="PANTHER" id="PTHR39757">
    <property type="match status" value="1"/>
</dbReference>
<dbReference type="PANTHER" id="PTHR39757:SF5">
    <property type="entry name" value="OS02G0190600 PROTEIN"/>
    <property type="match status" value="1"/>
</dbReference>
<dbReference type="Pfam" id="PF05834">
    <property type="entry name" value="Lycopene_cycl"/>
    <property type="match status" value="1"/>
</dbReference>
<dbReference type="SUPFAM" id="SSF51905">
    <property type="entry name" value="FAD/NAD(P)-binding domain"/>
    <property type="match status" value="1"/>
</dbReference>